<evidence type="ECO:0000255" key="1">
    <source>
        <dbReference type="HAMAP-Rule" id="MF_01849"/>
    </source>
</evidence>
<evidence type="ECO:0000255" key="2">
    <source>
        <dbReference type="PROSITE-ProRule" id="PRU01266"/>
    </source>
</evidence>
<sequence>MSEQLLTASTPIDAAPLSDNTVQTTAPATSKINLLDLNRQQMREFFAEMGEKPFRADQVMKWMYHYCYDDFEQMTDINKGLRAKLQRVAEIRAPEVAEEQRSVDGTIKWAIKVGDQQVETVYIPEADRATLCVSSQVGCALECKFCSTAQQGFNRNLRVSEIIGQVWRAAKIIGSLKSTGTRPITNVVMMGMGEPLLNLNNVVPAMDIMMDDFGFGLSKRRVTLSTSGVVPALDKLGDMIDVALAISLHAPTDDIRDEIVPINRKYNIETFLAAVRRYLDKSKANGGRVTVEYVMLDHINDSTEQAHQLAECLKDTPCKINLIPWNPFPGAPYGRSSNSRVDRFSKVLMEYGFTTIVRKTRGDDIDAACGQLAGEVIDRTKRTLKKKMAGEPIAIKTV</sequence>
<accession>Q7CJM9</accession>
<accession>Q74S81</accession>
<keyword id="KW-0004">4Fe-4S</keyword>
<keyword id="KW-0963">Cytoplasm</keyword>
<keyword id="KW-1015">Disulfide bond</keyword>
<keyword id="KW-0408">Iron</keyword>
<keyword id="KW-0411">Iron-sulfur</keyword>
<keyword id="KW-0479">Metal-binding</keyword>
<keyword id="KW-0489">Methyltransferase</keyword>
<keyword id="KW-1185">Reference proteome</keyword>
<keyword id="KW-0698">rRNA processing</keyword>
<keyword id="KW-0949">S-adenosyl-L-methionine</keyword>
<keyword id="KW-0808">Transferase</keyword>
<keyword id="KW-0819">tRNA processing</keyword>
<gene>
    <name evidence="1" type="primary">rlmN</name>
    <name type="ordered locus">YPO2882</name>
    <name type="ordered locus">y1350</name>
    <name type="ordered locus">YP_2748</name>
</gene>
<reference key="1">
    <citation type="journal article" date="2001" name="Nature">
        <title>Genome sequence of Yersinia pestis, the causative agent of plague.</title>
        <authorList>
            <person name="Parkhill J."/>
            <person name="Wren B.W."/>
            <person name="Thomson N.R."/>
            <person name="Titball R.W."/>
            <person name="Holden M.T.G."/>
            <person name="Prentice M.B."/>
            <person name="Sebaihia M."/>
            <person name="James K.D."/>
            <person name="Churcher C.M."/>
            <person name="Mungall K.L."/>
            <person name="Baker S."/>
            <person name="Basham D."/>
            <person name="Bentley S.D."/>
            <person name="Brooks K."/>
            <person name="Cerdeno-Tarraga A.-M."/>
            <person name="Chillingworth T."/>
            <person name="Cronin A."/>
            <person name="Davies R.M."/>
            <person name="Davis P."/>
            <person name="Dougan G."/>
            <person name="Feltwell T."/>
            <person name="Hamlin N."/>
            <person name="Holroyd S."/>
            <person name="Jagels K."/>
            <person name="Karlyshev A.V."/>
            <person name="Leather S."/>
            <person name="Moule S."/>
            <person name="Oyston P.C.F."/>
            <person name="Quail M.A."/>
            <person name="Rutherford K.M."/>
            <person name="Simmonds M."/>
            <person name="Skelton J."/>
            <person name="Stevens K."/>
            <person name="Whitehead S."/>
            <person name="Barrell B.G."/>
        </authorList>
    </citation>
    <scope>NUCLEOTIDE SEQUENCE [LARGE SCALE GENOMIC DNA]</scope>
    <source>
        <strain>CO-92 / Biovar Orientalis</strain>
    </source>
</reference>
<reference key="2">
    <citation type="journal article" date="2002" name="J. Bacteriol.">
        <title>Genome sequence of Yersinia pestis KIM.</title>
        <authorList>
            <person name="Deng W."/>
            <person name="Burland V."/>
            <person name="Plunkett G. III"/>
            <person name="Boutin A."/>
            <person name="Mayhew G.F."/>
            <person name="Liss P."/>
            <person name="Perna N.T."/>
            <person name="Rose D.J."/>
            <person name="Mau B."/>
            <person name="Zhou S."/>
            <person name="Schwartz D.C."/>
            <person name="Fetherston J.D."/>
            <person name="Lindler L.E."/>
            <person name="Brubaker R.R."/>
            <person name="Plano G.V."/>
            <person name="Straley S.C."/>
            <person name="McDonough K.A."/>
            <person name="Nilles M.L."/>
            <person name="Matson J.S."/>
            <person name="Blattner F.R."/>
            <person name="Perry R.D."/>
        </authorList>
    </citation>
    <scope>NUCLEOTIDE SEQUENCE [LARGE SCALE GENOMIC DNA]</scope>
    <source>
        <strain>KIM10+ / Biovar Mediaevalis</strain>
    </source>
</reference>
<reference key="3">
    <citation type="journal article" date="2004" name="DNA Res.">
        <title>Complete genome sequence of Yersinia pestis strain 91001, an isolate avirulent to humans.</title>
        <authorList>
            <person name="Song Y."/>
            <person name="Tong Z."/>
            <person name="Wang J."/>
            <person name="Wang L."/>
            <person name="Guo Z."/>
            <person name="Han Y."/>
            <person name="Zhang J."/>
            <person name="Pei D."/>
            <person name="Zhou D."/>
            <person name="Qin H."/>
            <person name="Pang X."/>
            <person name="Han Y."/>
            <person name="Zhai J."/>
            <person name="Li M."/>
            <person name="Cui B."/>
            <person name="Qi Z."/>
            <person name="Jin L."/>
            <person name="Dai R."/>
            <person name="Chen F."/>
            <person name="Li S."/>
            <person name="Ye C."/>
            <person name="Du Z."/>
            <person name="Lin W."/>
            <person name="Wang J."/>
            <person name="Yu J."/>
            <person name="Yang H."/>
            <person name="Wang J."/>
            <person name="Huang P."/>
            <person name="Yang R."/>
        </authorList>
    </citation>
    <scope>NUCLEOTIDE SEQUENCE [LARGE SCALE GENOMIC DNA]</scope>
    <source>
        <strain>91001 / Biovar Mediaevalis</strain>
    </source>
</reference>
<protein>
    <recommendedName>
        <fullName evidence="1">Dual-specificity RNA methyltransferase RlmN</fullName>
        <ecNumber evidence="1">2.1.1.192</ecNumber>
    </recommendedName>
    <alternativeName>
        <fullName evidence="1">23S rRNA (adenine(2503)-C(2))-methyltransferase</fullName>
    </alternativeName>
    <alternativeName>
        <fullName evidence="1">23S rRNA m2A2503 methyltransferase</fullName>
    </alternativeName>
    <alternativeName>
        <fullName evidence="1">Ribosomal RNA large subunit methyltransferase N</fullName>
    </alternativeName>
    <alternativeName>
        <fullName evidence="1">tRNA (adenine(37)-C(2))-methyltransferase</fullName>
    </alternativeName>
    <alternativeName>
        <fullName evidence="1">tRNA m2A37 methyltransferase</fullName>
    </alternativeName>
</protein>
<comment type="function">
    <text evidence="1">Specifically methylates position 2 of adenine 2503 in 23S rRNA and position 2 of adenine 37 in tRNAs. m2A2503 modification seems to play a crucial role in the proofreading step occurring at the peptidyl transferase center and thus would serve to optimize ribosomal fidelity.</text>
</comment>
<comment type="catalytic activity">
    <reaction evidence="1">
        <text>adenosine(2503) in 23S rRNA + 2 reduced [2Fe-2S]-[ferredoxin] + 2 S-adenosyl-L-methionine = 2-methyladenosine(2503) in 23S rRNA + 5'-deoxyadenosine + L-methionine + 2 oxidized [2Fe-2S]-[ferredoxin] + S-adenosyl-L-homocysteine</text>
        <dbReference type="Rhea" id="RHEA:42916"/>
        <dbReference type="Rhea" id="RHEA-COMP:10000"/>
        <dbReference type="Rhea" id="RHEA-COMP:10001"/>
        <dbReference type="Rhea" id="RHEA-COMP:10152"/>
        <dbReference type="Rhea" id="RHEA-COMP:10282"/>
        <dbReference type="ChEBI" id="CHEBI:17319"/>
        <dbReference type="ChEBI" id="CHEBI:33737"/>
        <dbReference type="ChEBI" id="CHEBI:33738"/>
        <dbReference type="ChEBI" id="CHEBI:57844"/>
        <dbReference type="ChEBI" id="CHEBI:57856"/>
        <dbReference type="ChEBI" id="CHEBI:59789"/>
        <dbReference type="ChEBI" id="CHEBI:74411"/>
        <dbReference type="ChEBI" id="CHEBI:74497"/>
        <dbReference type="EC" id="2.1.1.192"/>
    </reaction>
</comment>
<comment type="catalytic activity">
    <reaction evidence="1">
        <text>adenosine(37) in tRNA + 2 reduced [2Fe-2S]-[ferredoxin] + 2 S-adenosyl-L-methionine = 2-methyladenosine(37) in tRNA + 5'-deoxyadenosine + L-methionine + 2 oxidized [2Fe-2S]-[ferredoxin] + S-adenosyl-L-homocysteine</text>
        <dbReference type="Rhea" id="RHEA:43332"/>
        <dbReference type="Rhea" id="RHEA-COMP:10000"/>
        <dbReference type="Rhea" id="RHEA-COMP:10001"/>
        <dbReference type="Rhea" id="RHEA-COMP:10162"/>
        <dbReference type="Rhea" id="RHEA-COMP:10485"/>
        <dbReference type="ChEBI" id="CHEBI:17319"/>
        <dbReference type="ChEBI" id="CHEBI:33737"/>
        <dbReference type="ChEBI" id="CHEBI:33738"/>
        <dbReference type="ChEBI" id="CHEBI:57844"/>
        <dbReference type="ChEBI" id="CHEBI:57856"/>
        <dbReference type="ChEBI" id="CHEBI:59789"/>
        <dbReference type="ChEBI" id="CHEBI:74411"/>
        <dbReference type="ChEBI" id="CHEBI:74497"/>
        <dbReference type="EC" id="2.1.1.192"/>
    </reaction>
</comment>
<comment type="cofactor">
    <cofactor evidence="1">
        <name>[4Fe-4S] cluster</name>
        <dbReference type="ChEBI" id="CHEBI:49883"/>
    </cofactor>
    <text evidence="1">Binds 1 [4Fe-4S] cluster. The cluster is coordinated with 3 cysteines and an exchangeable S-adenosyl-L-methionine.</text>
</comment>
<comment type="subcellular location">
    <subcellularLocation>
        <location evidence="1">Cytoplasm</location>
    </subcellularLocation>
</comment>
<comment type="miscellaneous">
    <text evidence="1">Reaction proceeds by a ping-pong mechanism involving intermediate methylation of a conserved cysteine residue.</text>
</comment>
<comment type="similarity">
    <text evidence="1">Belongs to the radical SAM superfamily. RlmN family.</text>
</comment>
<feature type="chain" id="PRO_0000350538" description="Dual-specificity RNA methyltransferase RlmN">
    <location>
        <begin position="1"/>
        <end position="398"/>
    </location>
</feature>
<feature type="domain" description="Radical SAM core" evidence="2">
    <location>
        <begin position="125"/>
        <end position="364"/>
    </location>
</feature>
<feature type="active site" description="Proton acceptor" evidence="1">
    <location>
        <position position="119"/>
    </location>
</feature>
<feature type="active site" description="S-methylcysteine intermediate" evidence="1">
    <location>
        <position position="369"/>
    </location>
</feature>
<feature type="binding site" evidence="1">
    <location>
        <position position="139"/>
    </location>
    <ligand>
        <name>[4Fe-4S] cluster</name>
        <dbReference type="ChEBI" id="CHEBI:49883"/>
        <note>4Fe-4S-S-AdoMet</note>
    </ligand>
</feature>
<feature type="binding site" evidence="1">
    <location>
        <position position="143"/>
    </location>
    <ligand>
        <name>[4Fe-4S] cluster</name>
        <dbReference type="ChEBI" id="CHEBI:49883"/>
        <note>4Fe-4S-S-AdoMet</note>
    </ligand>
</feature>
<feature type="binding site" evidence="1">
    <location>
        <position position="146"/>
    </location>
    <ligand>
        <name>[4Fe-4S] cluster</name>
        <dbReference type="ChEBI" id="CHEBI:49883"/>
        <note>4Fe-4S-S-AdoMet</note>
    </ligand>
</feature>
<feature type="binding site" evidence="1">
    <location>
        <begin position="193"/>
        <end position="194"/>
    </location>
    <ligand>
        <name>S-adenosyl-L-methionine</name>
        <dbReference type="ChEBI" id="CHEBI:59789"/>
    </ligand>
</feature>
<feature type="binding site" evidence="1">
    <location>
        <position position="225"/>
    </location>
    <ligand>
        <name>S-adenosyl-L-methionine</name>
        <dbReference type="ChEBI" id="CHEBI:59789"/>
    </ligand>
</feature>
<feature type="binding site" evidence="1">
    <location>
        <begin position="247"/>
        <end position="249"/>
    </location>
    <ligand>
        <name>S-adenosyl-L-methionine</name>
        <dbReference type="ChEBI" id="CHEBI:59789"/>
    </ligand>
</feature>
<feature type="binding site" evidence="1">
    <location>
        <position position="326"/>
    </location>
    <ligand>
        <name>S-adenosyl-L-methionine</name>
        <dbReference type="ChEBI" id="CHEBI:59789"/>
    </ligand>
</feature>
<feature type="disulfide bond" description="(transient)" evidence="1">
    <location>
        <begin position="132"/>
        <end position="369"/>
    </location>
</feature>
<dbReference type="EC" id="2.1.1.192" evidence="1"/>
<dbReference type="EMBL" id="AL590842">
    <property type="protein sequence ID" value="CAL21493.1"/>
    <property type="molecule type" value="Genomic_DNA"/>
</dbReference>
<dbReference type="EMBL" id="AE009952">
    <property type="protein sequence ID" value="AAM84923.1"/>
    <property type="molecule type" value="Genomic_DNA"/>
</dbReference>
<dbReference type="EMBL" id="AE017042">
    <property type="protein sequence ID" value="AAS62936.1"/>
    <property type="molecule type" value="Genomic_DNA"/>
</dbReference>
<dbReference type="PIR" id="AB0351">
    <property type="entry name" value="AB0351"/>
</dbReference>
<dbReference type="RefSeq" id="WP_002209820.1">
    <property type="nucleotide sequence ID" value="NZ_WUCM01000067.1"/>
</dbReference>
<dbReference type="RefSeq" id="YP_002347817.1">
    <property type="nucleotide sequence ID" value="NC_003143.1"/>
</dbReference>
<dbReference type="SMR" id="Q7CJM9"/>
<dbReference type="IntAct" id="Q7CJM9">
    <property type="interactions" value="4"/>
</dbReference>
<dbReference type="STRING" id="214092.YPO2882"/>
<dbReference type="PaxDb" id="214092-YPO2882"/>
<dbReference type="DNASU" id="1146297"/>
<dbReference type="EnsemblBacteria" id="AAS62936">
    <property type="protein sequence ID" value="AAS62936"/>
    <property type="gene ID" value="YP_2748"/>
</dbReference>
<dbReference type="KEGG" id="ype:YPO2882"/>
<dbReference type="KEGG" id="ypk:y1350"/>
<dbReference type="KEGG" id="ypm:YP_2748"/>
<dbReference type="PATRIC" id="fig|214092.21.peg.3328"/>
<dbReference type="eggNOG" id="COG0820">
    <property type="taxonomic scope" value="Bacteria"/>
</dbReference>
<dbReference type="HOGENOM" id="CLU_029101_0_0_6"/>
<dbReference type="OMA" id="GTIKWAM"/>
<dbReference type="OrthoDB" id="9793973at2"/>
<dbReference type="Proteomes" id="UP000000815">
    <property type="component" value="Chromosome"/>
</dbReference>
<dbReference type="Proteomes" id="UP000001019">
    <property type="component" value="Chromosome"/>
</dbReference>
<dbReference type="Proteomes" id="UP000002490">
    <property type="component" value="Chromosome"/>
</dbReference>
<dbReference type="GO" id="GO:0005737">
    <property type="term" value="C:cytoplasm"/>
    <property type="evidence" value="ECO:0007669"/>
    <property type="project" value="UniProtKB-SubCell"/>
</dbReference>
<dbReference type="GO" id="GO:0051539">
    <property type="term" value="F:4 iron, 4 sulfur cluster binding"/>
    <property type="evidence" value="ECO:0007669"/>
    <property type="project" value="UniProtKB-UniRule"/>
</dbReference>
<dbReference type="GO" id="GO:0046872">
    <property type="term" value="F:metal ion binding"/>
    <property type="evidence" value="ECO:0007669"/>
    <property type="project" value="UniProtKB-KW"/>
</dbReference>
<dbReference type="GO" id="GO:0070040">
    <property type="term" value="F:rRNA (adenine(2503)-C2-)-methyltransferase activity"/>
    <property type="evidence" value="ECO:0007669"/>
    <property type="project" value="UniProtKB-UniRule"/>
</dbReference>
<dbReference type="GO" id="GO:0019843">
    <property type="term" value="F:rRNA binding"/>
    <property type="evidence" value="ECO:0007669"/>
    <property type="project" value="UniProtKB-UniRule"/>
</dbReference>
<dbReference type="GO" id="GO:0002935">
    <property type="term" value="F:tRNA (adenine(37)-C2)-methyltransferase activity"/>
    <property type="evidence" value="ECO:0007669"/>
    <property type="project" value="UniProtKB-UniRule"/>
</dbReference>
<dbReference type="GO" id="GO:0000049">
    <property type="term" value="F:tRNA binding"/>
    <property type="evidence" value="ECO:0007669"/>
    <property type="project" value="UniProtKB-UniRule"/>
</dbReference>
<dbReference type="GO" id="GO:0070475">
    <property type="term" value="P:rRNA base methylation"/>
    <property type="evidence" value="ECO:0000318"/>
    <property type="project" value="GO_Central"/>
</dbReference>
<dbReference type="GO" id="GO:0030488">
    <property type="term" value="P:tRNA methylation"/>
    <property type="evidence" value="ECO:0000318"/>
    <property type="project" value="GO_Central"/>
</dbReference>
<dbReference type="CDD" id="cd01335">
    <property type="entry name" value="Radical_SAM"/>
    <property type="match status" value="1"/>
</dbReference>
<dbReference type="FunFam" id="1.10.150.530:FF:000001">
    <property type="entry name" value="Dual-specificity RNA methyltransferase RlmN"/>
    <property type="match status" value="1"/>
</dbReference>
<dbReference type="FunFam" id="3.20.20.70:FF:000008">
    <property type="entry name" value="Dual-specificity RNA methyltransferase RlmN"/>
    <property type="match status" value="1"/>
</dbReference>
<dbReference type="Gene3D" id="1.10.150.530">
    <property type="match status" value="1"/>
</dbReference>
<dbReference type="Gene3D" id="3.20.20.70">
    <property type="entry name" value="Aldolase class I"/>
    <property type="match status" value="1"/>
</dbReference>
<dbReference type="HAMAP" id="MF_01849">
    <property type="entry name" value="RNA_methyltr_RlmN"/>
    <property type="match status" value="1"/>
</dbReference>
<dbReference type="InterPro" id="IPR013785">
    <property type="entry name" value="Aldolase_TIM"/>
</dbReference>
<dbReference type="InterPro" id="IPR040072">
    <property type="entry name" value="Methyltransferase_A"/>
</dbReference>
<dbReference type="InterPro" id="IPR048641">
    <property type="entry name" value="RlmN_N"/>
</dbReference>
<dbReference type="InterPro" id="IPR027492">
    <property type="entry name" value="RNA_MTrfase_RlmN"/>
</dbReference>
<dbReference type="InterPro" id="IPR004383">
    <property type="entry name" value="rRNA_lsu_MTrfase_RlmN/Cfr"/>
</dbReference>
<dbReference type="InterPro" id="IPR007197">
    <property type="entry name" value="rSAM"/>
</dbReference>
<dbReference type="NCBIfam" id="NF008396">
    <property type="entry name" value="PRK11194.1"/>
    <property type="match status" value="1"/>
</dbReference>
<dbReference type="NCBIfam" id="TIGR00048">
    <property type="entry name" value="rRNA_mod_RlmN"/>
    <property type="match status" value="1"/>
</dbReference>
<dbReference type="PANTHER" id="PTHR30544">
    <property type="entry name" value="23S RRNA METHYLTRANSFERASE"/>
    <property type="match status" value="1"/>
</dbReference>
<dbReference type="PANTHER" id="PTHR30544:SF5">
    <property type="entry name" value="RADICAL SAM CORE DOMAIN-CONTAINING PROTEIN"/>
    <property type="match status" value="1"/>
</dbReference>
<dbReference type="Pfam" id="PF04055">
    <property type="entry name" value="Radical_SAM"/>
    <property type="match status" value="1"/>
</dbReference>
<dbReference type="Pfam" id="PF21016">
    <property type="entry name" value="RlmN_N"/>
    <property type="match status" value="1"/>
</dbReference>
<dbReference type="PIRSF" id="PIRSF006004">
    <property type="entry name" value="CHP00048"/>
    <property type="match status" value="1"/>
</dbReference>
<dbReference type="SFLD" id="SFLDF00275">
    <property type="entry name" value="adenosine_C2_methyltransferase"/>
    <property type="match status" value="1"/>
</dbReference>
<dbReference type="SFLD" id="SFLDG01062">
    <property type="entry name" value="methyltransferase_(Class_A)"/>
    <property type="match status" value="1"/>
</dbReference>
<dbReference type="SUPFAM" id="SSF102114">
    <property type="entry name" value="Radical SAM enzymes"/>
    <property type="match status" value="1"/>
</dbReference>
<dbReference type="PROSITE" id="PS51918">
    <property type="entry name" value="RADICAL_SAM"/>
    <property type="match status" value="1"/>
</dbReference>
<organism>
    <name type="scientific">Yersinia pestis</name>
    <dbReference type="NCBI Taxonomy" id="632"/>
    <lineage>
        <taxon>Bacteria</taxon>
        <taxon>Pseudomonadati</taxon>
        <taxon>Pseudomonadota</taxon>
        <taxon>Gammaproteobacteria</taxon>
        <taxon>Enterobacterales</taxon>
        <taxon>Yersiniaceae</taxon>
        <taxon>Yersinia</taxon>
    </lineage>
</organism>
<name>RLMN_YERPE</name>
<proteinExistence type="inferred from homology"/>